<reference key="1">
    <citation type="journal article" date="2001" name="Genome Res.">
        <title>Towards a catalog of human genes and proteins: sequencing and analysis of 500 novel complete protein coding human cDNAs.</title>
        <authorList>
            <person name="Wiemann S."/>
            <person name="Weil B."/>
            <person name="Wellenreuther R."/>
            <person name="Gassenhuber J."/>
            <person name="Glassl S."/>
            <person name="Ansorge W."/>
            <person name="Boecher M."/>
            <person name="Bloecker H."/>
            <person name="Bauersachs S."/>
            <person name="Blum H."/>
            <person name="Lauber J."/>
            <person name="Duesterhoeft A."/>
            <person name="Beyer A."/>
            <person name="Koehrer K."/>
            <person name="Strack N."/>
            <person name="Mewes H.-W."/>
            <person name="Ottenwaelder B."/>
            <person name="Obermaier B."/>
            <person name="Tampe J."/>
            <person name="Heubner D."/>
            <person name="Wambutt R."/>
            <person name="Korn B."/>
            <person name="Klein M."/>
            <person name="Poustka A."/>
        </authorList>
    </citation>
    <scope>NUCLEOTIDE SEQUENCE [LARGE SCALE MRNA]</scope>
    <scope>VARIANT ARG-236</scope>
    <source>
        <tissue>Uterus</tissue>
    </source>
</reference>
<reference key="2">
    <citation type="submission" date="2004-06" db="EMBL/GenBank/DDBJ databases">
        <title>Cloning of human full open reading frames in Gateway(TM) system entry vector (pDONR201).</title>
        <authorList>
            <person name="Ebert L."/>
            <person name="Schick M."/>
            <person name="Neubert P."/>
            <person name="Schatten R."/>
            <person name="Henze S."/>
            <person name="Korn B."/>
        </authorList>
    </citation>
    <scope>NUCLEOTIDE SEQUENCE [LARGE SCALE MRNA]</scope>
    <scope>VARIANT ARG-236</scope>
</reference>
<reference key="3">
    <citation type="journal article" date="2006" name="Nature">
        <title>DNA sequence and analysis of human chromosome 8.</title>
        <authorList>
            <person name="Nusbaum C."/>
            <person name="Mikkelsen T.S."/>
            <person name="Zody M.C."/>
            <person name="Asakawa S."/>
            <person name="Taudien S."/>
            <person name="Garber M."/>
            <person name="Kodira C.D."/>
            <person name="Schueler M.G."/>
            <person name="Shimizu A."/>
            <person name="Whittaker C.A."/>
            <person name="Chang J.L."/>
            <person name="Cuomo C.A."/>
            <person name="Dewar K."/>
            <person name="FitzGerald M.G."/>
            <person name="Yang X."/>
            <person name="Allen N.R."/>
            <person name="Anderson S."/>
            <person name="Asakawa T."/>
            <person name="Blechschmidt K."/>
            <person name="Bloom T."/>
            <person name="Borowsky M.L."/>
            <person name="Butler J."/>
            <person name="Cook A."/>
            <person name="Corum B."/>
            <person name="DeArellano K."/>
            <person name="DeCaprio D."/>
            <person name="Dooley K.T."/>
            <person name="Dorris L. III"/>
            <person name="Engels R."/>
            <person name="Gloeckner G."/>
            <person name="Hafez N."/>
            <person name="Hagopian D.S."/>
            <person name="Hall J.L."/>
            <person name="Ishikawa S.K."/>
            <person name="Jaffe D.B."/>
            <person name="Kamat A."/>
            <person name="Kudoh J."/>
            <person name="Lehmann R."/>
            <person name="Lokitsang T."/>
            <person name="Macdonald P."/>
            <person name="Major J.E."/>
            <person name="Matthews C.D."/>
            <person name="Mauceli E."/>
            <person name="Menzel U."/>
            <person name="Mihalev A.H."/>
            <person name="Minoshima S."/>
            <person name="Murayama Y."/>
            <person name="Naylor J.W."/>
            <person name="Nicol R."/>
            <person name="Nguyen C."/>
            <person name="O'Leary S.B."/>
            <person name="O'Neill K."/>
            <person name="Parker S.C.J."/>
            <person name="Polley A."/>
            <person name="Raymond C.K."/>
            <person name="Reichwald K."/>
            <person name="Rodriguez J."/>
            <person name="Sasaki T."/>
            <person name="Schilhabel M."/>
            <person name="Siddiqui R."/>
            <person name="Smith C.L."/>
            <person name="Sneddon T.P."/>
            <person name="Talamas J.A."/>
            <person name="Tenzin P."/>
            <person name="Topham K."/>
            <person name="Venkataraman V."/>
            <person name="Wen G."/>
            <person name="Yamazaki S."/>
            <person name="Young S.K."/>
            <person name="Zeng Q."/>
            <person name="Zimmer A.R."/>
            <person name="Rosenthal A."/>
            <person name="Birren B.W."/>
            <person name="Platzer M."/>
            <person name="Shimizu N."/>
            <person name="Lander E.S."/>
        </authorList>
    </citation>
    <scope>NUCLEOTIDE SEQUENCE [LARGE SCALE GENOMIC DNA]</scope>
</reference>
<reference key="4">
    <citation type="submission" date="2005-09" db="EMBL/GenBank/DDBJ databases">
        <authorList>
            <person name="Mural R.J."/>
            <person name="Istrail S."/>
            <person name="Sutton G.G."/>
            <person name="Florea L."/>
            <person name="Halpern A.L."/>
            <person name="Mobarry C.M."/>
            <person name="Lippert R."/>
            <person name="Walenz B."/>
            <person name="Shatkay H."/>
            <person name="Dew I."/>
            <person name="Miller J.R."/>
            <person name="Flanigan M.J."/>
            <person name="Edwards N.J."/>
            <person name="Bolanos R."/>
            <person name="Fasulo D."/>
            <person name="Halldorsson B.V."/>
            <person name="Hannenhalli S."/>
            <person name="Turner R."/>
            <person name="Yooseph S."/>
            <person name="Lu F."/>
            <person name="Nusskern D.R."/>
            <person name="Shue B.C."/>
            <person name="Zheng X.H."/>
            <person name="Zhong F."/>
            <person name="Delcher A.L."/>
            <person name="Huson D.H."/>
            <person name="Kravitz S.A."/>
            <person name="Mouchard L."/>
            <person name="Reinert K."/>
            <person name="Remington K.A."/>
            <person name="Clark A.G."/>
            <person name="Waterman M.S."/>
            <person name="Eichler E.E."/>
            <person name="Adams M.D."/>
            <person name="Hunkapiller M.W."/>
            <person name="Myers E.W."/>
            <person name="Venter J.C."/>
        </authorList>
    </citation>
    <scope>NUCLEOTIDE SEQUENCE [LARGE SCALE GENOMIC DNA]</scope>
    <scope>VARIANT ARG-236</scope>
</reference>
<reference key="5">
    <citation type="journal article" date="2004" name="Genome Res.">
        <title>The status, quality, and expansion of the NIH full-length cDNA project: the Mammalian Gene Collection (MGC).</title>
        <authorList>
            <consortium name="The MGC Project Team"/>
        </authorList>
    </citation>
    <scope>NUCLEOTIDE SEQUENCE [LARGE SCALE MRNA]</scope>
    <scope>VARIANT ARG-236</scope>
    <source>
        <tissue>Brain</tissue>
        <tissue>Lung</tissue>
        <tissue>Uterus</tissue>
    </source>
</reference>
<reference key="6">
    <citation type="journal article" date="2006" name="Cell">
        <title>Global, in vivo, and site-specific phosphorylation dynamics in signaling networks.</title>
        <authorList>
            <person name="Olsen J.V."/>
            <person name="Blagoev B."/>
            <person name="Gnad F."/>
            <person name="Macek B."/>
            <person name="Kumar C."/>
            <person name="Mortensen P."/>
            <person name="Mann M."/>
        </authorList>
    </citation>
    <scope>PHOSPHORYLATION [LARGE SCALE ANALYSIS] AT SER-75</scope>
    <scope>IDENTIFICATION BY MASS SPECTROMETRY [LARGE SCALE ANALYSIS]</scope>
    <source>
        <tissue>Cervix carcinoma</tissue>
    </source>
</reference>
<reference key="7">
    <citation type="journal article" date="2007" name="Mol. Cell">
        <title>Mammalian Maf1 is a negative regulator of transcription by all three nuclear RNA polymerases.</title>
        <authorList>
            <person name="Johnson S.S."/>
            <person name="Zhang C."/>
            <person name="Fromm J."/>
            <person name="Willis I.M."/>
            <person name="Johnson D.L."/>
        </authorList>
    </citation>
    <scope>FUNCTION</scope>
</reference>
<reference key="8">
    <citation type="journal article" date="2007" name="Int. J. Biol. Sci.">
        <title>Human Maf1 negatively regulates RNA polymerase III transcription via the TFIIB family members Brf1 and Brf2.</title>
        <authorList>
            <person name="Rollins J."/>
            <person name="Veras I."/>
            <person name="Cabarcas S."/>
            <person name="Willis I."/>
            <person name="Schramm L."/>
        </authorList>
    </citation>
    <scope>INTERACTION WITH BRF2</scope>
    <scope>FUNCTION</scope>
    <scope>SUBCELLULAR LOCATION</scope>
</reference>
<reference key="9">
    <citation type="journal article" date="2008" name="Proc. Natl. Acad. Sci. U.S.A.">
        <title>A quantitative atlas of mitotic phosphorylation.</title>
        <authorList>
            <person name="Dephoure N."/>
            <person name="Zhou C."/>
            <person name="Villen J."/>
            <person name="Beausoleil S.A."/>
            <person name="Bakalarski C.E."/>
            <person name="Elledge S.J."/>
            <person name="Gygi S.P."/>
        </authorList>
    </citation>
    <scope>PHOSPHORYLATION [LARGE SCALE ANALYSIS] AT SER-60 AND SER-75</scope>
    <scope>IDENTIFICATION BY MASS SPECTROMETRY [LARGE SCALE ANALYSIS]</scope>
    <source>
        <tissue>Cervix carcinoma</tissue>
    </source>
</reference>
<reference key="10">
    <citation type="journal article" date="2008" name="J. Mol. Biol.">
        <title>Regulation of RNA polymerase III transcription by Maf1 in mammalian cells.</title>
        <authorList>
            <person name="Goodfellow S.J."/>
            <person name="Graham E.L."/>
            <person name="Kantidakis T."/>
            <person name="Marshall L."/>
            <person name="Coppins B.A."/>
            <person name="Oficjalska-Pham D."/>
            <person name="Gerard M."/>
            <person name="Lefebvre O."/>
            <person name="White R.J."/>
        </authorList>
    </citation>
    <scope>FUNCTION</scope>
    <scope>PHOSPHORYLATION</scope>
    <scope>INTERACTION WITH POLR3F; BRF1 AND GTF3C1</scope>
</reference>
<reference key="11">
    <citation type="journal article" date="2009" name="Sci. Signal.">
        <title>Quantitative phosphoproteomic analysis of T cell receptor signaling reveals system-wide modulation of protein-protein interactions.</title>
        <authorList>
            <person name="Mayya V."/>
            <person name="Lundgren D.H."/>
            <person name="Hwang S.-I."/>
            <person name="Rezaul K."/>
            <person name="Wu L."/>
            <person name="Eng J.K."/>
            <person name="Rodionov V."/>
            <person name="Han D.K."/>
        </authorList>
    </citation>
    <scope>PHOSPHORYLATION [LARGE SCALE ANALYSIS] AT SER-75</scope>
    <scope>IDENTIFICATION BY MASS SPECTROMETRY [LARGE SCALE ANALYSIS]</scope>
    <source>
        <tissue>Leukemic T-cell</tissue>
    </source>
</reference>
<reference key="12">
    <citation type="journal article" date="2010" name="J. Biol. Chem.">
        <title>Requirement of the mTOR kinase for the regulation of Maf1 phosphorylation and control of RNA polymerase III-dependent transcription in cancer cells.</title>
        <authorList>
            <person name="Shor B."/>
            <person name="Wu J."/>
            <person name="Shakey Q."/>
            <person name="Toral-Barza L."/>
            <person name="Shi C."/>
            <person name="Follettie M."/>
            <person name="Yu K."/>
        </authorList>
    </citation>
    <scope>FUNCTION</scope>
    <scope>PHOSPHORYLATION AT SER-60; THR-64; SER-68 AND SER-75</scope>
    <scope>SUBCELLULAR LOCATION</scope>
    <scope>MUTAGENESIS OF SER-60; THR-64; SER-68 AND SER-75</scope>
</reference>
<reference key="13">
    <citation type="journal article" date="2010" name="Mol. Cell. Biol.">
        <title>mTORC1 directly phosphorylates and regulates human MAF1.</title>
        <authorList>
            <person name="Michels A.A."/>
            <person name="Robitaille A.M."/>
            <person name="Buczynski-Ruchonnet D."/>
            <person name="Hodroj W."/>
            <person name="Reina J.H."/>
            <person name="Hall M.N."/>
            <person name="Hernandez N."/>
        </authorList>
    </citation>
    <scope>FUNCTION</scope>
    <scope>PHOSPHORYLATION AT SER-60; SER-68 AND SER-75 BY MTOR</scope>
    <scope>PHOSPHORYLATION AT THR-64; SER-65; SER-70; THR-212 AND SER-214</scope>
    <scope>MUTAGENESIS OF SER-60; SER-68 AND SER-75</scope>
</reference>
<reference key="14">
    <citation type="journal article" date="2010" name="Proc. Natl. Acad. Sci. U.S.A.">
        <title>mTOR associates with TFIIIC, is found at tRNA and 5S rRNA genes, and targets their repressor Maf1.</title>
        <authorList>
            <person name="Kantidakis T."/>
            <person name="Ramsbottom B.A."/>
            <person name="Birch J.L."/>
            <person name="Dowding S.N."/>
            <person name="White R.J."/>
        </authorList>
    </citation>
    <scope>FUNCTION</scope>
    <scope>PHOSPHORYLATION AT SER-75</scope>
    <scope>SUBCELLULAR LOCATION</scope>
    <scope>MUTAGENESIS OF SER-75</scope>
</reference>
<reference key="15">
    <citation type="journal article" date="2010" name="Sci. Signal.">
        <title>Quantitative phosphoproteomics reveals widespread full phosphorylation site occupancy during mitosis.</title>
        <authorList>
            <person name="Olsen J.V."/>
            <person name="Vermeulen M."/>
            <person name="Santamaria A."/>
            <person name="Kumar C."/>
            <person name="Miller M.L."/>
            <person name="Jensen L.J."/>
            <person name="Gnad F."/>
            <person name="Cox J."/>
            <person name="Jensen T.S."/>
            <person name="Nigg E.A."/>
            <person name="Brunak S."/>
            <person name="Mann M."/>
        </authorList>
    </citation>
    <scope>PHOSPHORYLATION [LARGE SCALE ANALYSIS] AT SER-60 AND SER-75</scope>
    <scope>IDENTIFICATION BY MASS SPECTROMETRY [LARGE SCALE ANALYSIS]</scope>
    <source>
        <tissue>Cervix carcinoma</tissue>
    </source>
</reference>
<reference key="16">
    <citation type="journal article" date="2011" name="Sci. Signal.">
        <title>System-wide temporal characterization of the proteome and phosphoproteome of human embryonic stem cell differentiation.</title>
        <authorList>
            <person name="Rigbolt K.T."/>
            <person name="Prokhorova T.A."/>
            <person name="Akimov V."/>
            <person name="Henningsen J."/>
            <person name="Johansen P.T."/>
            <person name="Kratchmarova I."/>
            <person name="Kassem M."/>
            <person name="Mann M."/>
            <person name="Olsen J.V."/>
            <person name="Blagoev B."/>
        </authorList>
    </citation>
    <scope>PHOSPHORYLATION [LARGE SCALE ANALYSIS] AT SER-75</scope>
    <scope>IDENTIFICATION BY MASS SPECTROMETRY [LARGE SCALE ANALYSIS]</scope>
</reference>
<reference key="17">
    <citation type="journal article" date="2013" name="J. Biol. Chem.">
        <title>Covalent small ubiquitin-like modifier (SUMO) modification of Maf1 protein controls RNA polymerase III-dependent transcription repression.</title>
        <authorList>
            <person name="Rohira A.D."/>
            <person name="Chen C.Y."/>
            <person name="Allen J.R."/>
            <person name="Johnson D.L."/>
        </authorList>
    </citation>
    <scope>SUMOYLATION AT LYS-35</scope>
    <scope>PHOSPHORYLATION AT SER-75</scope>
    <scope>MUTAGENESIS OF LYS-35</scope>
</reference>
<reference key="18">
    <citation type="journal article" date="2013" name="J. Proteome Res.">
        <title>Toward a comprehensive characterization of a human cancer cell phosphoproteome.</title>
        <authorList>
            <person name="Zhou H."/>
            <person name="Di Palma S."/>
            <person name="Preisinger C."/>
            <person name="Peng M."/>
            <person name="Polat A.N."/>
            <person name="Heck A.J."/>
            <person name="Mohammed S."/>
        </authorList>
    </citation>
    <scope>PHOSPHORYLATION [LARGE SCALE ANALYSIS] AT SER-75 AND SER-214</scope>
    <scope>IDENTIFICATION BY MASS SPECTROMETRY [LARGE SCALE ANALYSIS]</scope>
    <source>
        <tissue>Cervix carcinoma</tissue>
        <tissue>Erythroleukemia</tissue>
    </source>
</reference>
<reference key="19">
    <citation type="journal article" date="2014" name="J. Proteomics">
        <title>An enzyme assisted RP-RPLC approach for in-depth analysis of human liver phosphoproteome.</title>
        <authorList>
            <person name="Bian Y."/>
            <person name="Song C."/>
            <person name="Cheng K."/>
            <person name="Dong M."/>
            <person name="Wang F."/>
            <person name="Huang J."/>
            <person name="Sun D."/>
            <person name="Wang L."/>
            <person name="Ye M."/>
            <person name="Zou H."/>
        </authorList>
    </citation>
    <scope>IDENTIFICATION BY MASS SPECTROMETRY [LARGE SCALE ANALYSIS]</scope>
    <source>
        <tissue>Liver</tissue>
    </source>
</reference>
<reference key="20">
    <citation type="journal article" date="2016" name="Genome Res.">
        <title>Human MAF1 targets and represses active RNA polymerase III genes by preventing recruitment rather than inducing long-term transcriptional arrest.</title>
        <authorList>
            <person name="Orioli A."/>
            <person name="Praz V."/>
            <person name="Lhote P."/>
            <person name="Hernandez N."/>
        </authorList>
    </citation>
    <scope>FUNCTION</scope>
</reference>
<reference key="21">
    <citation type="journal article" date="2010" name="Cell">
        <title>Molecular basis of RNA polymerase III transcription repression by Maf1.</title>
        <authorList>
            <person name="Vannini A."/>
            <person name="Ringel R."/>
            <person name="Kusser A.G."/>
            <person name="Berninghausen O."/>
            <person name="Kassavetis G.A."/>
            <person name="Cramer P."/>
        </authorList>
    </citation>
    <scope>X-RAY CRYSTALLOGRAPHY (1.55 ANGSTROMS) OF 1-205</scope>
    <scope>FUNCTION</scope>
</reference>
<accession>Q9H063</accession>
<accession>D3DWL4</accession>
<comment type="function">
    <text evidence="1 5 6 7 8 9 10 11 13">Plays a role in the repression of RNA polymerase III-mediated transcription in response to changing nutritional, environmental and cellular stress conditions to balance the production of highly abundant tRNAs, 5S rRNA, and other small non-coding RNAs with cell growth and maintenance (PubMed:18377933, PubMed:20233713, PubMed:20516213, PubMed:20543138). Also plays a key role in cell fate determination by promoting mesorderm induction and adipocyte differentiation (By similarity). Mechanistically, associates with the RNA polymerase III clamp and thereby impairs its recruitment to the complex made of the promoter DNA, TBP and the initiation factor TFIIIB (PubMed:17505538, PubMed:20887893). When nutrients are available and mTOR kinase is active, MAF1 is hyperphosphorylated and RNA polymerase III is engaged in transcription. Stress-induced MAF1 dephosphorylation results in nuclear localization, increased targeting of gene-bound RNA polymerase III and a decrease in the transcriptional readout (PubMed:26941251). Additionally, may also regulate RNA polymerase I and RNA polymerase II-dependent transcription through its ability to regulate expression of the central initiation factor TBP (PubMed:17499043).</text>
</comment>
<comment type="subunit">
    <text evidence="6 7">Interacts with TFIIIB subunits BRF1 and BRF2 (PubMed:17505538, PubMed:18377933). Interacts with Pol III subunit POLR3F. Interacts with TFIIIC subunit GTF3C1 (PubMed:18377933).</text>
</comment>
<comment type="interaction">
    <interactant intactId="EBI-720354">
        <id>Q9H063</id>
    </interactant>
    <interactant intactId="EBI-717832">
        <id>Q9UH62</id>
        <label>ARMCX3</label>
    </interactant>
    <organismsDiffer>false</organismsDiffer>
    <experiments>4</experiments>
</comment>
<comment type="interaction">
    <interactant intactId="EBI-720354">
        <id>Q9H063</id>
    </interactant>
    <interactant intactId="EBI-347804">
        <id>P68400</id>
        <label>CSNK2A1</label>
    </interactant>
    <organismsDiffer>false</organismsDiffer>
    <experiments>2</experiments>
</comment>
<comment type="interaction">
    <interactant intactId="EBI-720354">
        <id>Q9H063</id>
    </interactant>
    <interactant intactId="EBI-466029">
        <id>P42858</id>
        <label>HTT</label>
    </interactant>
    <organismsDiffer>false</organismsDiffer>
    <experiments>3</experiments>
</comment>
<comment type="interaction">
    <interactant intactId="EBI-720354">
        <id>Q9H063</id>
    </interactant>
    <interactant intactId="EBI-358311">
        <id>P12004</id>
        <label>PCNA</label>
    </interactant>
    <organismsDiffer>false</organismsDiffer>
    <experiments>4</experiments>
</comment>
<comment type="interaction">
    <interactant intactId="EBI-720354">
        <id>Q9H063</id>
    </interactant>
    <interactant intactId="EBI-720609">
        <id>O76024</id>
        <label>WFS1</label>
    </interactant>
    <organismsDiffer>false</organismsDiffer>
    <experiments>3</experiments>
</comment>
<comment type="subcellular location">
    <subcellularLocation>
        <location evidence="6 8">Nucleus</location>
    </subcellularLocation>
    <subcellularLocation>
        <location evidence="8">Cytoplasm</location>
    </subcellularLocation>
</comment>
<comment type="PTM">
    <text evidence="8 9 10 12">Phosphorylated at Ser-60, Ser-68 and Ser-75; the major sites of phosphorylation. Nuclear accumulation correlates with a concomitant dephosphorylation. Phosphorylation may attenuate its RNA polymerase III-repressive function.</text>
</comment>
<comment type="PTM">
    <text evidence="12">Sumoylated with SUMO1 and SUMO2, mainly on Lys-35. Desumoylated by SENP1. SUMOylation promotes the ability of MAF1 to repress transcription and suppress colony formation.</text>
</comment>
<comment type="similarity">
    <text evidence="16">Belongs to the MAF1 family.</text>
</comment>
<dbReference type="EMBL" id="AL136937">
    <property type="protein sequence ID" value="CAB66871.1"/>
    <property type="molecule type" value="mRNA"/>
</dbReference>
<dbReference type="EMBL" id="CR533463">
    <property type="protein sequence ID" value="CAG38494.1"/>
    <property type="molecule type" value="mRNA"/>
</dbReference>
<dbReference type="EMBL" id="AC104592">
    <property type="status" value="NOT_ANNOTATED_CDS"/>
    <property type="molecule type" value="Genomic_DNA"/>
</dbReference>
<dbReference type="EMBL" id="CH471162">
    <property type="protein sequence ID" value="EAW82158.1"/>
    <property type="molecule type" value="Genomic_DNA"/>
</dbReference>
<dbReference type="EMBL" id="CH471162">
    <property type="protein sequence ID" value="EAW82159.1"/>
    <property type="molecule type" value="Genomic_DNA"/>
</dbReference>
<dbReference type="EMBL" id="BC014082">
    <property type="protein sequence ID" value="AAH14082.1"/>
    <property type="molecule type" value="mRNA"/>
</dbReference>
<dbReference type="EMBL" id="BC018714">
    <property type="protein sequence ID" value="AAH18714.1"/>
    <property type="molecule type" value="mRNA"/>
</dbReference>
<dbReference type="EMBL" id="BC031273">
    <property type="protein sequence ID" value="AAH31273.1"/>
    <property type="molecule type" value="mRNA"/>
</dbReference>
<dbReference type="CCDS" id="CCDS6416.1"/>
<dbReference type="RefSeq" id="NP_115648.2">
    <property type="nucleotide sequence ID" value="NM_032272.5"/>
</dbReference>
<dbReference type="RefSeq" id="XP_016869393.1">
    <property type="nucleotide sequence ID" value="XM_017013904.1"/>
</dbReference>
<dbReference type="PDB" id="3NR5">
    <property type="method" value="X-ray"/>
    <property type="resolution" value="1.55 A"/>
    <property type="chains" value="A=1-205"/>
</dbReference>
<dbReference type="PDBsum" id="3NR5"/>
<dbReference type="SMR" id="Q9H063"/>
<dbReference type="BioGRID" id="123965">
    <property type="interactions" value="32"/>
</dbReference>
<dbReference type="DIP" id="DIP-53028N"/>
<dbReference type="FunCoup" id="Q9H063">
    <property type="interactions" value="3914"/>
</dbReference>
<dbReference type="IntAct" id="Q9H063">
    <property type="interactions" value="31"/>
</dbReference>
<dbReference type="MINT" id="Q9H063"/>
<dbReference type="STRING" id="9606.ENSP00000318604"/>
<dbReference type="iPTMnet" id="Q9H063"/>
<dbReference type="PhosphoSitePlus" id="Q9H063"/>
<dbReference type="BioMuta" id="MAF1"/>
<dbReference type="DMDM" id="296434582"/>
<dbReference type="jPOST" id="Q9H063"/>
<dbReference type="MassIVE" id="Q9H063"/>
<dbReference type="PaxDb" id="9606-ENSP00000318604"/>
<dbReference type="PeptideAtlas" id="Q9H063"/>
<dbReference type="ProteomicsDB" id="80206"/>
<dbReference type="Pumba" id="Q9H063"/>
<dbReference type="Antibodypedia" id="28301">
    <property type="antibodies" value="177 antibodies from 29 providers"/>
</dbReference>
<dbReference type="DNASU" id="84232"/>
<dbReference type="Ensembl" id="ENST00000322428.10">
    <property type="protein sequence ID" value="ENSP00000318604.5"/>
    <property type="gene ID" value="ENSG00000179632.11"/>
</dbReference>
<dbReference type="Ensembl" id="ENST00000532522.5">
    <property type="protein sequence ID" value="ENSP00000436720.1"/>
    <property type="gene ID" value="ENSG00000179632.11"/>
</dbReference>
<dbReference type="Ensembl" id="ENST00000715465.1">
    <property type="protein sequence ID" value="ENSP00000520454.1"/>
    <property type="gene ID" value="ENSG00000179632.11"/>
</dbReference>
<dbReference type="GeneID" id="84232"/>
<dbReference type="KEGG" id="hsa:84232"/>
<dbReference type="MANE-Select" id="ENST00000322428.10">
    <property type="protein sequence ID" value="ENSP00000318604.5"/>
    <property type="RefSeq nucleotide sequence ID" value="NM_032272.5"/>
    <property type="RefSeq protein sequence ID" value="NP_115648.2"/>
</dbReference>
<dbReference type="UCSC" id="uc003zbc.2">
    <property type="organism name" value="human"/>
</dbReference>
<dbReference type="AGR" id="HGNC:24966"/>
<dbReference type="CTD" id="84232"/>
<dbReference type="DisGeNET" id="84232"/>
<dbReference type="GeneCards" id="MAF1"/>
<dbReference type="HGNC" id="HGNC:24966">
    <property type="gene designation" value="MAF1"/>
</dbReference>
<dbReference type="HPA" id="ENSG00000179632">
    <property type="expression patterns" value="Low tissue specificity"/>
</dbReference>
<dbReference type="MIM" id="610210">
    <property type="type" value="gene"/>
</dbReference>
<dbReference type="neXtProt" id="NX_Q9H063"/>
<dbReference type="OpenTargets" id="ENSG00000179632"/>
<dbReference type="PharmGKB" id="PA142671489"/>
<dbReference type="VEuPathDB" id="HostDB:ENSG00000179632"/>
<dbReference type="eggNOG" id="KOG3104">
    <property type="taxonomic scope" value="Eukaryota"/>
</dbReference>
<dbReference type="GeneTree" id="ENSGT00390000006896"/>
<dbReference type="InParanoid" id="Q9H063"/>
<dbReference type="OrthoDB" id="277029at2759"/>
<dbReference type="PAN-GO" id="Q9H063">
    <property type="GO annotations" value="3 GO annotations based on evolutionary models"/>
</dbReference>
<dbReference type="PhylomeDB" id="Q9H063"/>
<dbReference type="TreeFam" id="TF315149"/>
<dbReference type="PathwayCommons" id="Q9H063"/>
<dbReference type="Reactome" id="R-HSA-8943724">
    <property type="pathway name" value="Regulation of PTEN gene transcription"/>
</dbReference>
<dbReference type="SignaLink" id="Q9H063"/>
<dbReference type="SIGNOR" id="Q9H063"/>
<dbReference type="BioGRID-ORCS" id="84232">
    <property type="hits" value="22 hits in 1157 CRISPR screens"/>
</dbReference>
<dbReference type="ChiTaRS" id="MAF1">
    <property type="organism name" value="human"/>
</dbReference>
<dbReference type="EvolutionaryTrace" id="Q9H063"/>
<dbReference type="GeneWiki" id="MAF1"/>
<dbReference type="GenomeRNAi" id="84232"/>
<dbReference type="Pharos" id="Q9H063">
    <property type="development level" value="Tbio"/>
</dbReference>
<dbReference type="PRO" id="PR:Q9H063"/>
<dbReference type="Proteomes" id="UP000005640">
    <property type="component" value="Chromosome 8"/>
</dbReference>
<dbReference type="RNAct" id="Q9H063">
    <property type="molecule type" value="protein"/>
</dbReference>
<dbReference type="Bgee" id="ENSG00000179632">
    <property type="expression patterns" value="Expressed in hindlimb stylopod muscle and 181 other cell types or tissues"/>
</dbReference>
<dbReference type="ExpressionAtlas" id="Q9H063">
    <property type="expression patterns" value="baseline and differential"/>
</dbReference>
<dbReference type="GO" id="GO:0030424">
    <property type="term" value="C:axon"/>
    <property type="evidence" value="ECO:0007669"/>
    <property type="project" value="Ensembl"/>
</dbReference>
<dbReference type="GO" id="GO:0005737">
    <property type="term" value="C:cytoplasm"/>
    <property type="evidence" value="ECO:0000314"/>
    <property type="project" value="GO_Central"/>
</dbReference>
<dbReference type="GO" id="GO:0005829">
    <property type="term" value="C:cytosol"/>
    <property type="evidence" value="ECO:0000314"/>
    <property type="project" value="HPA"/>
</dbReference>
<dbReference type="GO" id="GO:0030425">
    <property type="term" value="C:dendrite"/>
    <property type="evidence" value="ECO:0007669"/>
    <property type="project" value="Ensembl"/>
</dbReference>
<dbReference type="GO" id="GO:0060077">
    <property type="term" value="C:inhibitory synapse"/>
    <property type="evidence" value="ECO:0007669"/>
    <property type="project" value="Ensembl"/>
</dbReference>
<dbReference type="GO" id="GO:0005654">
    <property type="term" value="C:nucleoplasm"/>
    <property type="evidence" value="ECO:0000314"/>
    <property type="project" value="HPA"/>
</dbReference>
<dbReference type="GO" id="GO:0005634">
    <property type="term" value="C:nucleus"/>
    <property type="evidence" value="ECO:0000314"/>
    <property type="project" value="UniProtKB"/>
</dbReference>
<dbReference type="GO" id="GO:0048471">
    <property type="term" value="C:perinuclear region of cytoplasm"/>
    <property type="evidence" value="ECO:0007669"/>
    <property type="project" value="Ensembl"/>
</dbReference>
<dbReference type="GO" id="GO:0005886">
    <property type="term" value="C:plasma membrane"/>
    <property type="evidence" value="ECO:0007669"/>
    <property type="project" value="Ensembl"/>
</dbReference>
<dbReference type="GO" id="GO:0050811">
    <property type="term" value="F:GABA receptor binding"/>
    <property type="evidence" value="ECO:0007669"/>
    <property type="project" value="Ensembl"/>
</dbReference>
<dbReference type="GO" id="GO:0000994">
    <property type="term" value="F:RNA polymerase III core binding"/>
    <property type="evidence" value="ECO:0000318"/>
    <property type="project" value="GO_Central"/>
</dbReference>
<dbReference type="GO" id="GO:0001002">
    <property type="term" value="F:RNA polymerase III type 1 promoter sequence-specific DNA binding"/>
    <property type="evidence" value="ECO:0000314"/>
    <property type="project" value="UniProtKB"/>
</dbReference>
<dbReference type="GO" id="GO:0001003">
    <property type="term" value="F:RNA polymerase III type 2 promoter sequence-specific DNA binding"/>
    <property type="evidence" value="ECO:0000314"/>
    <property type="project" value="UniProtKB"/>
</dbReference>
<dbReference type="GO" id="GO:0001006">
    <property type="term" value="F:RNA polymerase III type 3 promoter sequence-specific DNA binding"/>
    <property type="evidence" value="ECO:0000314"/>
    <property type="project" value="UniProtKB"/>
</dbReference>
<dbReference type="GO" id="GO:0016479">
    <property type="term" value="P:negative regulation of transcription by RNA polymerase I"/>
    <property type="evidence" value="ECO:0000314"/>
    <property type="project" value="CACAO"/>
</dbReference>
<dbReference type="GO" id="GO:0016480">
    <property type="term" value="P:negative regulation of transcription by RNA polymerase III"/>
    <property type="evidence" value="ECO:0000314"/>
    <property type="project" value="UniProtKB"/>
</dbReference>
<dbReference type="FunFam" id="3.40.1000.50:FF:000001">
    <property type="entry name" value="Repressor of RNA polymerase III transcription MAF1"/>
    <property type="match status" value="1"/>
</dbReference>
<dbReference type="FunFam" id="3.40.1000.50:FF:000002">
    <property type="entry name" value="Repressor of RNA polymerase III transcription MAF1"/>
    <property type="match status" value="1"/>
</dbReference>
<dbReference type="Gene3D" id="3.40.1000.50">
    <property type="entry name" value="Repressor of RNA polymerase III transcription Maf1"/>
    <property type="match status" value="2"/>
</dbReference>
<dbReference type="InterPro" id="IPR015257">
    <property type="entry name" value="Maf1"/>
</dbReference>
<dbReference type="InterPro" id="IPR038564">
    <property type="entry name" value="Maf1_sf"/>
</dbReference>
<dbReference type="PANTHER" id="PTHR22504">
    <property type="entry name" value="REPRESSOR OF RNA POLYMERASE III TRANSCRIPTION MAF1"/>
    <property type="match status" value="1"/>
</dbReference>
<dbReference type="PANTHER" id="PTHR22504:SF0">
    <property type="entry name" value="REPRESSOR OF RNA POLYMERASE III TRANSCRIPTION MAF1 HOMOLOG"/>
    <property type="match status" value="1"/>
</dbReference>
<dbReference type="Pfam" id="PF09174">
    <property type="entry name" value="Maf1"/>
    <property type="match status" value="1"/>
</dbReference>
<dbReference type="PIRSF" id="PIRSF037240">
    <property type="entry name" value="RNA_polIII_Trep_MAF1"/>
    <property type="match status" value="1"/>
</dbReference>
<feature type="chain" id="PRO_0000213973" description="Repressor of RNA polymerase III transcription MAF1 homolog">
    <location>
        <begin position="1"/>
        <end position="256"/>
    </location>
</feature>
<feature type="region of interest" description="Disordered" evidence="2">
    <location>
        <begin position="58"/>
        <end position="85"/>
    </location>
</feature>
<feature type="region of interest" description="Disordered" evidence="2">
    <location>
        <begin position="212"/>
        <end position="252"/>
    </location>
</feature>
<feature type="compositionally biased region" description="Polar residues" evidence="2">
    <location>
        <begin position="61"/>
        <end position="76"/>
    </location>
</feature>
<feature type="compositionally biased region" description="Acidic residues" evidence="2">
    <location>
        <begin position="218"/>
        <end position="231"/>
    </location>
</feature>
<feature type="modified residue" description="Phosphoserine; by MTOR" evidence="8 9 18 20">
    <location>
        <position position="60"/>
    </location>
</feature>
<feature type="modified residue" description="Phosphothreonine" evidence="8 9">
    <location>
        <position position="64"/>
    </location>
</feature>
<feature type="modified residue" description="Phosphoserine" evidence="9">
    <location>
        <position position="65"/>
    </location>
</feature>
<feature type="modified residue" description="Phosphoserine; by MTOR" evidence="8 9">
    <location>
        <position position="68"/>
    </location>
</feature>
<feature type="modified residue" description="Phosphoserine" evidence="9">
    <location>
        <position position="70"/>
    </location>
</feature>
<feature type="modified residue" description="Phosphoserine; by MTOR" evidence="8 9 10 12 17 18 19 20 21 22">
    <location>
        <position position="75"/>
    </location>
</feature>
<feature type="modified residue" description="Phosphothreonine" evidence="9">
    <location>
        <position position="212"/>
    </location>
</feature>
<feature type="modified residue" description="Phosphoserine" evidence="9 22">
    <location>
        <position position="214"/>
    </location>
</feature>
<feature type="cross-link" description="Glycyl lysine isopeptide (Lys-Gly) (interchain with G-Cter in SUMO1 and SUMO2)">
    <location>
        <position position="35"/>
    </location>
</feature>
<feature type="sequence variant" id="VAR_060408" description="In dbSNP:rs11546144." evidence="3 4 14 15">
    <original>G</original>
    <variation>R</variation>
    <location>
        <position position="236"/>
    </location>
</feature>
<feature type="mutagenesis site" description="No interaction with RNA pol III and impaired recruitment to tRNA gene promoters." evidence="12">
    <original>K</original>
    <variation>R</variation>
    <location>
        <position position="35"/>
    </location>
</feature>
<feature type="mutagenesis site" description="Stronger repressive effect on RNA polymerase III transcription; when associated with A-68 and A-75. Much stronger repressive effect on RNA polymerase III transcription and loss of phosphorylation; when associated with A-64, A-68 and A-75." evidence="8 9">
    <original>S</original>
    <variation>A</variation>
    <location>
        <position position="60"/>
    </location>
</feature>
<feature type="mutagenesis site" description="No change. Weaker repressive effect on RNA polymerase III transcription; when associated with D-68 and D-75." evidence="8 9">
    <original>S</original>
    <variation>D</variation>
    <location>
        <position position="60"/>
    </location>
</feature>
<feature type="mutagenesis site" description="Much stronger repressive effect on RNA polymerase III transcription and loss of phosphorylation; when associated with A-60, A-68 and A-75." evidence="8">
    <original>T</original>
    <variation>A</variation>
    <location>
        <position position="64"/>
    </location>
</feature>
<feature type="mutagenesis site" description="Stronger repressive effect on RNA polymerase III transcription; when associated with A-60 and A-75. Much stronger repressive effect on RNA polymerase III transcription and loss of phosphorylation; when associated with A-60, A-64 and A-75." evidence="8 9">
    <original>S</original>
    <variation>A</variation>
    <location>
        <position position="68"/>
    </location>
</feature>
<feature type="mutagenesis site" description="No change. Weaker repressive effect on RNA polymerase III transcription; when associated with D-60 and D-75." evidence="8 9">
    <original>S</original>
    <variation>D</variation>
    <location>
        <position position="68"/>
    </location>
</feature>
<feature type="mutagenesis site" description="Stronger repressive effect on RNA polymerase III transcription. Stronger repressive effect on RNA polymerase III transcription; when associated with A-60 and A-68. Much stronger repressive effect on RNA polymerase III transcription and loss of phosphorylation; when associated with A-60, A-64 and A-68." evidence="8 9 10">
    <original>S</original>
    <variation>A</variation>
    <location>
        <position position="75"/>
    </location>
</feature>
<feature type="mutagenesis site" description="No change. Weaker repressive effect on RNA polymerase III transcription; when associated with D-60 and D-68." evidence="8 9 10">
    <original>S</original>
    <variation>D</variation>
    <location>
        <position position="75"/>
    </location>
</feature>
<feature type="strand" evidence="23">
    <location>
        <begin position="1"/>
        <end position="4"/>
    </location>
</feature>
<feature type="helix" evidence="23">
    <location>
        <begin position="7"/>
        <end position="15"/>
    </location>
</feature>
<feature type="strand" evidence="23">
    <location>
        <begin position="27"/>
        <end position="34"/>
    </location>
</feature>
<feature type="helix" evidence="23">
    <location>
        <begin position="91"/>
        <end position="104"/>
    </location>
</feature>
<feature type="turn" evidence="23">
    <location>
        <begin position="105"/>
        <end position="107"/>
    </location>
</feature>
<feature type="helix" evidence="23">
    <location>
        <begin position="115"/>
        <end position="117"/>
    </location>
</feature>
<feature type="strand" evidence="23">
    <location>
        <begin position="118"/>
        <end position="120"/>
    </location>
</feature>
<feature type="helix" evidence="23">
    <location>
        <begin position="124"/>
        <end position="139"/>
    </location>
</feature>
<feature type="helix" evidence="23">
    <location>
        <begin position="140"/>
        <end position="142"/>
    </location>
</feature>
<feature type="helix" evidence="23">
    <location>
        <begin position="143"/>
        <end position="158"/>
    </location>
</feature>
<feature type="helix" evidence="23">
    <location>
        <begin position="160"/>
        <end position="162"/>
    </location>
</feature>
<feature type="strand" evidence="23">
    <location>
        <begin position="164"/>
        <end position="168"/>
    </location>
</feature>
<feature type="helix" evidence="23">
    <location>
        <begin position="172"/>
        <end position="174"/>
    </location>
</feature>
<feature type="strand" evidence="23">
    <location>
        <begin position="183"/>
        <end position="192"/>
    </location>
</feature>
<feature type="turn" evidence="23">
    <location>
        <begin position="193"/>
        <end position="196"/>
    </location>
</feature>
<feature type="strand" evidence="23">
    <location>
        <begin position="197"/>
        <end position="205"/>
    </location>
</feature>
<evidence type="ECO:0000250" key="1">
    <source>
        <dbReference type="UniProtKB" id="Q9D0U6"/>
    </source>
</evidence>
<evidence type="ECO:0000256" key="2">
    <source>
        <dbReference type="SAM" id="MobiDB-lite"/>
    </source>
</evidence>
<evidence type="ECO:0000269" key="3">
    <source>
    </source>
</evidence>
<evidence type="ECO:0000269" key="4">
    <source>
    </source>
</evidence>
<evidence type="ECO:0000269" key="5">
    <source>
    </source>
</evidence>
<evidence type="ECO:0000269" key="6">
    <source>
    </source>
</evidence>
<evidence type="ECO:0000269" key="7">
    <source>
    </source>
</evidence>
<evidence type="ECO:0000269" key="8">
    <source>
    </source>
</evidence>
<evidence type="ECO:0000269" key="9">
    <source>
    </source>
</evidence>
<evidence type="ECO:0000269" key="10">
    <source>
    </source>
</evidence>
<evidence type="ECO:0000269" key="11">
    <source>
    </source>
</evidence>
<evidence type="ECO:0000269" key="12">
    <source>
    </source>
</evidence>
<evidence type="ECO:0000269" key="13">
    <source>
    </source>
</evidence>
<evidence type="ECO:0000269" key="14">
    <source ref="2"/>
</evidence>
<evidence type="ECO:0000269" key="15">
    <source ref="4"/>
</evidence>
<evidence type="ECO:0000305" key="16"/>
<evidence type="ECO:0007744" key="17">
    <source>
    </source>
</evidence>
<evidence type="ECO:0007744" key="18">
    <source>
    </source>
</evidence>
<evidence type="ECO:0007744" key="19">
    <source>
    </source>
</evidence>
<evidence type="ECO:0007744" key="20">
    <source>
    </source>
</evidence>
<evidence type="ECO:0007744" key="21">
    <source>
    </source>
</evidence>
<evidence type="ECO:0007744" key="22">
    <source>
    </source>
</evidence>
<evidence type="ECO:0007829" key="23">
    <source>
        <dbReference type="PDB" id="3NR5"/>
    </source>
</evidence>
<keyword id="KW-0002">3D-structure</keyword>
<keyword id="KW-0963">Cytoplasm</keyword>
<keyword id="KW-1017">Isopeptide bond</keyword>
<keyword id="KW-0539">Nucleus</keyword>
<keyword id="KW-0597">Phosphoprotein</keyword>
<keyword id="KW-1267">Proteomics identification</keyword>
<keyword id="KW-1185">Reference proteome</keyword>
<keyword id="KW-0678">Repressor</keyword>
<keyword id="KW-0804">Transcription</keyword>
<keyword id="KW-0805">Transcription regulation</keyword>
<keyword id="KW-0832">Ubl conjugation</keyword>
<organism>
    <name type="scientific">Homo sapiens</name>
    <name type="common">Human</name>
    <dbReference type="NCBI Taxonomy" id="9606"/>
    <lineage>
        <taxon>Eukaryota</taxon>
        <taxon>Metazoa</taxon>
        <taxon>Chordata</taxon>
        <taxon>Craniata</taxon>
        <taxon>Vertebrata</taxon>
        <taxon>Euteleostomi</taxon>
        <taxon>Mammalia</taxon>
        <taxon>Eutheria</taxon>
        <taxon>Euarchontoglires</taxon>
        <taxon>Primates</taxon>
        <taxon>Haplorrhini</taxon>
        <taxon>Catarrhini</taxon>
        <taxon>Hominidae</taxon>
        <taxon>Homo</taxon>
    </lineage>
</organism>
<protein>
    <recommendedName>
        <fullName>Repressor of RNA polymerase III transcription MAF1 homolog</fullName>
    </recommendedName>
</protein>
<proteinExistence type="evidence at protein level"/>
<gene>
    <name type="primary">MAF1</name>
</gene>
<sequence>MKLLENSSFEAINSQLTVETGDAHIIGRIESYSCKMAGDDKHMFKQFCQEGQPHVLEALSPPQTSGLSPSRLSKSQGGEEEGPLSDKCSRKTLFYLIATLNESFRPDYDFSTARSHEFSREPSLSWVVNAVNCSLFSAVREDFKDLKPQLWNAVDEEICLAECDIYSYNPDLDSDPFGEDGSLWSFNYFFYNKRLKRIVFFSCRSISGSTYTPSEAGNELDMELGEEEVEEESRSGGSGAEETSTMEEDRVPVICI</sequence>
<name>MAF1_HUMAN</name>